<organism>
    <name type="scientific">Rickettsia typhi (strain ATCC VR-144 / Wilmington)</name>
    <dbReference type="NCBI Taxonomy" id="257363"/>
    <lineage>
        <taxon>Bacteria</taxon>
        <taxon>Pseudomonadati</taxon>
        <taxon>Pseudomonadota</taxon>
        <taxon>Alphaproteobacteria</taxon>
        <taxon>Rickettsiales</taxon>
        <taxon>Rickettsiaceae</taxon>
        <taxon>Rickettsieae</taxon>
        <taxon>Rickettsia</taxon>
        <taxon>typhus group</taxon>
    </lineage>
</organism>
<sequence>MSKINKLEHIRNIGICAHIDAGKTTTTERILYYTGKSHKIGEVHEGGATMDWMEQEQERGITITSAATTCKWQDKVINIIDTPGHVDFTIEVERSLRVLDGAVAVFDGVAGVEPQSETVWRQADKYNVPRMCFVNKMDRMGADFYKCVDMIKDRLGAKSLILQLPIGIEENFKGIINLIKMKAVIWKDESLGAEYFEEDIPTDMQDKAAEYRARLLDMTVELDDTIMERYLSGEEITEEEIKILIRKGTIEAKFYPVLCGSAFKNKGVQPLLDAIVDFLPSPIDIGIVKGIEVSTSEEKDFPISITEPFSALAFKIMNDPFVGSLTFIRIYSGKITSGASVVNTVKNKREKIGRMLLMHANNREDIKEASAGDIVALAGLKDTSTGDTLSDIDTQVVLERMEFPEPVIELAVEPKSTADQEKMGLALSRLAAEDPSFKVSTDHETGQTVIKGMGELHLEIIIDRMRREFKVEANIGAPQVAYRETITTACEIDYTHKKQSGGAGQFARVKIIFEPLKDVIDLKDEDKNKTFVFESKIVGGAVPKEYIPGVEKGLNNIRETGIVAGYPMIDFKATLVDGAFHDVDSSVLAFEIAAKGAFREGMQKGNPKLLEPIMKVEVITPDEYMGDIIGDLNSRRGQIQSMDPRGNAQVVTAYVPLAEMFGYVNTLRSLSQGRAQFSMIFSHYDQVPSQVADIIKAKK</sequence>
<feature type="chain" id="PRO_0000091205" description="Elongation factor G">
    <location>
        <begin position="1"/>
        <end position="699"/>
    </location>
</feature>
<feature type="domain" description="tr-type G">
    <location>
        <begin position="8"/>
        <end position="283"/>
    </location>
</feature>
<feature type="binding site" evidence="1">
    <location>
        <begin position="17"/>
        <end position="24"/>
    </location>
    <ligand>
        <name>GTP</name>
        <dbReference type="ChEBI" id="CHEBI:37565"/>
    </ligand>
</feature>
<feature type="binding site" evidence="1">
    <location>
        <begin position="81"/>
        <end position="85"/>
    </location>
    <ligand>
        <name>GTP</name>
        <dbReference type="ChEBI" id="CHEBI:37565"/>
    </ligand>
</feature>
<feature type="binding site" evidence="1">
    <location>
        <begin position="135"/>
        <end position="138"/>
    </location>
    <ligand>
        <name>GTP</name>
        <dbReference type="ChEBI" id="CHEBI:37565"/>
    </ligand>
</feature>
<feature type="sequence conflict" description="In Ref. 1; AAM90925." evidence="2" ref="1">
    <original>F</original>
    <variation>L</variation>
    <location>
        <position position="263"/>
    </location>
</feature>
<feature type="sequence conflict" description="In Ref. 1; AAM90925." evidence="2" ref="1">
    <original>T</original>
    <variation>L</variation>
    <location>
        <position position="306"/>
    </location>
</feature>
<feature type="sequence conflict" description="In Ref. 1; AAM90925." evidence="2" ref="1">
    <original>S</original>
    <variation>K</variation>
    <location>
        <position position="641"/>
    </location>
</feature>
<evidence type="ECO:0000255" key="1">
    <source>
        <dbReference type="HAMAP-Rule" id="MF_00054"/>
    </source>
</evidence>
<evidence type="ECO:0000305" key="2"/>
<keyword id="KW-0963">Cytoplasm</keyword>
<keyword id="KW-0251">Elongation factor</keyword>
<keyword id="KW-0342">GTP-binding</keyword>
<keyword id="KW-0547">Nucleotide-binding</keyword>
<keyword id="KW-0648">Protein biosynthesis</keyword>
<proteinExistence type="inferred from homology"/>
<protein>
    <recommendedName>
        <fullName evidence="1">Elongation factor G</fullName>
        <shortName evidence="1">EF-G</shortName>
    </recommendedName>
</protein>
<accession>Q8KTB2</accession>
<accession>Q68XN5</accession>
<dbReference type="EMBL" id="AF502176">
    <property type="protein sequence ID" value="AAM90925.1"/>
    <property type="molecule type" value="Genomic_DNA"/>
</dbReference>
<dbReference type="EMBL" id="AE017197">
    <property type="protein sequence ID" value="AAU03607.1"/>
    <property type="molecule type" value="Genomic_DNA"/>
</dbReference>
<dbReference type="RefSeq" id="WP_011190594.1">
    <property type="nucleotide sequence ID" value="NC_006142.1"/>
</dbReference>
<dbReference type="SMR" id="Q8KTB2"/>
<dbReference type="KEGG" id="rty:RT0121"/>
<dbReference type="eggNOG" id="COG0480">
    <property type="taxonomic scope" value="Bacteria"/>
</dbReference>
<dbReference type="HOGENOM" id="CLU_002794_4_1_5"/>
<dbReference type="OrthoDB" id="9802948at2"/>
<dbReference type="Proteomes" id="UP000000604">
    <property type="component" value="Chromosome"/>
</dbReference>
<dbReference type="GO" id="GO:0005737">
    <property type="term" value="C:cytoplasm"/>
    <property type="evidence" value="ECO:0007669"/>
    <property type="project" value="UniProtKB-SubCell"/>
</dbReference>
<dbReference type="GO" id="GO:0005525">
    <property type="term" value="F:GTP binding"/>
    <property type="evidence" value="ECO:0007669"/>
    <property type="project" value="UniProtKB-UniRule"/>
</dbReference>
<dbReference type="GO" id="GO:0003924">
    <property type="term" value="F:GTPase activity"/>
    <property type="evidence" value="ECO:0007669"/>
    <property type="project" value="InterPro"/>
</dbReference>
<dbReference type="GO" id="GO:0003746">
    <property type="term" value="F:translation elongation factor activity"/>
    <property type="evidence" value="ECO:0007669"/>
    <property type="project" value="UniProtKB-UniRule"/>
</dbReference>
<dbReference type="GO" id="GO:0032790">
    <property type="term" value="P:ribosome disassembly"/>
    <property type="evidence" value="ECO:0007669"/>
    <property type="project" value="TreeGrafter"/>
</dbReference>
<dbReference type="CDD" id="cd01886">
    <property type="entry name" value="EF-G"/>
    <property type="match status" value="1"/>
</dbReference>
<dbReference type="CDD" id="cd16262">
    <property type="entry name" value="EFG_III"/>
    <property type="match status" value="1"/>
</dbReference>
<dbReference type="CDD" id="cd01434">
    <property type="entry name" value="EFG_mtEFG1_IV"/>
    <property type="match status" value="1"/>
</dbReference>
<dbReference type="CDD" id="cd03713">
    <property type="entry name" value="EFG_mtEFG_C"/>
    <property type="match status" value="1"/>
</dbReference>
<dbReference type="CDD" id="cd04088">
    <property type="entry name" value="EFG_mtEFG_II"/>
    <property type="match status" value="1"/>
</dbReference>
<dbReference type="FunFam" id="2.40.30.10:FF:000006">
    <property type="entry name" value="Elongation factor G"/>
    <property type="match status" value="1"/>
</dbReference>
<dbReference type="FunFam" id="3.30.230.10:FF:000003">
    <property type="entry name" value="Elongation factor G"/>
    <property type="match status" value="1"/>
</dbReference>
<dbReference type="FunFam" id="3.30.70.240:FF:000001">
    <property type="entry name" value="Elongation factor G"/>
    <property type="match status" value="1"/>
</dbReference>
<dbReference type="FunFam" id="3.30.70.870:FF:000001">
    <property type="entry name" value="Elongation factor G"/>
    <property type="match status" value="1"/>
</dbReference>
<dbReference type="FunFam" id="3.40.50.300:FF:000029">
    <property type="entry name" value="Elongation factor G"/>
    <property type="match status" value="1"/>
</dbReference>
<dbReference type="Gene3D" id="3.30.230.10">
    <property type="match status" value="1"/>
</dbReference>
<dbReference type="Gene3D" id="3.30.70.240">
    <property type="match status" value="1"/>
</dbReference>
<dbReference type="Gene3D" id="3.30.70.870">
    <property type="entry name" value="Elongation Factor G (Translational Gtpase), domain 3"/>
    <property type="match status" value="1"/>
</dbReference>
<dbReference type="Gene3D" id="3.40.50.300">
    <property type="entry name" value="P-loop containing nucleotide triphosphate hydrolases"/>
    <property type="match status" value="1"/>
</dbReference>
<dbReference type="Gene3D" id="2.40.30.10">
    <property type="entry name" value="Translation factors"/>
    <property type="match status" value="1"/>
</dbReference>
<dbReference type="HAMAP" id="MF_00054_B">
    <property type="entry name" value="EF_G_EF_2_B"/>
    <property type="match status" value="1"/>
</dbReference>
<dbReference type="InterPro" id="IPR053905">
    <property type="entry name" value="EF-G-like_DII"/>
</dbReference>
<dbReference type="InterPro" id="IPR041095">
    <property type="entry name" value="EFG_II"/>
</dbReference>
<dbReference type="InterPro" id="IPR009022">
    <property type="entry name" value="EFG_III"/>
</dbReference>
<dbReference type="InterPro" id="IPR035647">
    <property type="entry name" value="EFG_III/V"/>
</dbReference>
<dbReference type="InterPro" id="IPR047872">
    <property type="entry name" value="EFG_IV"/>
</dbReference>
<dbReference type="InterPro" id="IPR035649">
    <property type="entry name" value="EFG_V"/>
</dbReference>
<dbReference type="InterPro" id="IPR000640">
    <property type="entry name" value="EFG_V-like"/>
</dbReference>
<dbReference type="InterPro" id="IPR031157">
    <property type="entry name" value="G_TR_CS"/>
</dbReference>
<dbReference type="InterPro" id="IPR027417">
    <property type="entry name" value="P-loop_NTPase"/>
</dbReference>
<dbReference type="InterPro" id="IPR020568">
    <property type="entry name" value="Ribosomal_Su5_D2-typ_SF"/>
</dbReference>
<dbReference type="InterPro" id="IPR014721">
    <property type="entry name" value="Ribsml_uS5_D2-typ_fold_subgr"/>
</dbReference>
<dbReference type="InterPro" id="IPR005225">
    <property type="entry name" value="Small_GTP-bd"/>
</dbReference>
<dbReference type="InterPro" id="IPR000795">
    <property type="entry name" value="T_Tr_GTP-bd_dom"/>
</dbReference>
<dbReference type="InterPro" id="IPR009000">
    <property type="entry name" value="Transl_B-barrel_sf"/>
</dbReference>
<dbReference type="InterPro" id="IPR004540">
    <property type="entry name" value="Transl_elong_EFG/EF2"/>
</dbReference>
<dbReference type="InterPro" id="IPR005517">
    <property type="entry name" value="Transl_elong_EFG/EF2_IV"/>
</dbReference>
<dbReference type="NCBIfam" id="TIGR00484">
    <property type="entry name" value="EF-G"/>
    <property type="match status" value="1"/>
</dbReference>
<dbReference type="NCBIfam" id="NF009381">
    <property type="entry name" value="PRK12740.1-5"/>
    <property type="match status" value="1"/>
</dbReference>
<dbReference type="NCBIfam" id="TIGR00231">
    <property type="entry name" value="small_GTP"/>
    <property type="match status" value="1"/>
</dbReference>
<dbReference type="PANTHER" id="PTHR43261:SF1">
    <property type="entry name" value="RIBOSOME-RELEASING FACTOR 2, MITOCHONDRIAL"/>
    <property type="match status" value="1"/>
</dbReference>
<dbReference type="PANTHER" id="PTHR43261">
    <property type="entry name" value="TRANSLATION ELONGATION FACTOR G-RELATED"/>
    <property type="match status" value="1"/>
</dbReference>
<dbReference type="Pfam" id="PF22042">
    <property type="entry name" value="EF-G_D2"/>
    <property type="match status" value="1"/>
</dbReference>
<dbReference type="Pfam" id="PF00679">
    <property type="entry name" value="EFG_C"/>
    <property type="match status" value="1"/>
</dbReference>
<dbReference type="Pfam" id="PF14492">
    <property type="entry name" value="EFG_III"/>
    <property type="match status" value="1"/>
</dbReference>
<dbReference type="Pfam" id="PF03764">
    <property type="entry name" value="EFG_IV"/>
    <property type="match status" value="1"/>
</dbReference>
<dbReference type="Pfam" id="PF00009">
    <property type="entry name" value="GTP_EFTU"/>
    <property type="match status" value="1"/>
</dbReference>
<dbReference type="PRINTS" id="PR00315">
    <property type="entry name" value="ELONGATNFCT"/>
</dbReference>
<dbReference type="SMART" id="SM00838">
    <property type="entry name" value="EFG_C"/>
    <property type="match status" value="1"/>
</dbReference>
<dbReference type="SMART" id="SM00889">
    <property type="entry name" value="EFG_IV"/>
    <property type="match status" value="1"/>
</dbReference>
<dbReference type="SUPFAM" id="SSF54980">
    <property type="entry name" value="EF-G C-terminal domain-like"/>
    <property type="match status" value="2"/>
</dbReference>
<dbReference type="SUPFAM" id="SSF52540">
    <property type="entry name" value="P-loop containing nucleoside triphosphate hydrolases"/>
    <property type="match status" value="1"/>
</dbReference>
<dbReference type="SUPFAM" id="SSF54211">
    <property type="entry name" value="Ribosomal protein S5 domain 2-like"/>
    <property type="match status" value="1"/>
</dbReference>
<dbReference type="SUPFAM" id="SSF50447">
    <property type="entry name" value="Translation proteins"/>
    <property type="match status" value="1"/>
</dbReference>
<dbReference type="PROSITE" id="PS00301">
    <property type="entry name" value="G_TR_1"/>
    <property type="match status" value="1"/>
</dbReference>
<dbReference type="PROSITE" id="PS51722">
    <property type="entry name" value="G_TR_2"/>
    <property type="match status" value="1"/>
</dbReference>
<comment type="function">
    <text evidence="1">Catalyzes the GTP-dependent ribosomal translocation step during translation elongation. During this step, the ribosome changes from the pre-translocational (PRE) to the post-translocational (POST) state as the newly formed A-site-bound peptidyl-tRNA and P-site-bound deacylated tRNA move to the P and E sites, respectively. Catalyzes the coordinated movement of the two tRNA molecules, the mRNA and conformational changes in the ribosome.</text>
</comment>
<comment type="subcellular location">
    <subcellularLocation>
        <location evidence="1">Cytoplasm</location>
    </subcellularLocation>
</comment>
<comment type="similarity">
    <text evidence="1">Belongs to the TRAFAC class translation factor GTPase superfamily. Classic translation factor GTPase family. EF-G/EF-2 subfamily.</text>
</comment>
<name>EFG_RICTY</name>
<reference key="1">
    <citation type="journal article" date="2002" name="Mol. Biol. Evol.">
        <title>Proliferation and deterioration of Rickettsia palindromic elements.</title>
        <authorList>
            <person name="Amiri H."/>
            <person name="Alsmark C.M."/>
            <person name="Andersson S.G.E."/>
        </authorList>
    </citation>
    <scope>NUCLEOTIDE SEQUENCE [GENOMIC DNA]</scope>
</reference>
<reference key="2">
    <citation type="journal article" date="2004" name="J. Bacteriol.">
        <title>Complete genome sequence of Rickettsia typhi and comparison with sequences of other Rickettsiae.</title>
        <authorList>
            <person name="McLeod M.P."/>
            <person name="Qin X."/>
            <person name="Karpathy S.E."/>
            <person name="Gioia J."/>
            <person name="Highlander S.K."/>
            <person name="Fox G.E."/>
            <person name="McNeill T.Z."/>
            <person name="Jiang H."/>
            <person name="Muzny D."/>
            <person name="Jacob L.S."/>
            <person name="Hawes A.C."/>
            <person name="Sodergren E."/>
            <person name="Gill R."/>
            <person name="Hume J."/>
            <person name="Morgan M."/>
            <person name="Fan G."/>
            <person name="Amin A.G."/>
            <person name="Gibbs R.A."/>
            <person name="Hong C."/>
            <person name="Yu X.-J."/>
            <person name="Walker D.H."/>
            <person name="Weinstock G.M."/>
        </authorList>
    </citation>
    <scope>NUCLEOTIDE SEQUENCE [LARGE SCALE GENOMIC DNA]</scope>
    <source>
        <strain>ATCC VR-144 / Wilmington</strain>
    </source>
</reference>
<gene>
    <name evidence="1" type="primary">fusA</name>
    <name type="ordered locus">RT0121</name>
</gene>